<keyword id="KW-1017">Isopeptide bond</keyword>
<keyword id="KW-0472">Membrane</keyword>
<keyword id="KW-0597">Phosphoprotein</keyword>
<keyword id="KW-1185">Reference proteome</keyword>
<keyword id="KW-0812">Transmembrane</keyword>
<keyword id="KW-1133">Transmembrane helix</keyword>
<keyword id="KW-0813">Transport</keyword>
<keyword id="KW-0832">Ubl conjugation</keyword>
<dbReference type="EMBL" id="X51751">
    <property type="protein sequence ID" value="CAA36040.1"/>
    <property type="molecule type" value="Genomic_DNA"/>
</dbReference>
<dbReference type="EMBL" id="U18813">
    <property type="protein sequence ID" value="AAB64592.1"/>
    <property type="molecule type" value="Genomic_DNA"/>
</dbReference>
<dbReference type="EMBL" id="V01306">
    <property type="status" value="NOT_ANNOTATED_CDS"/>
    <property type="molecule type" value="Genomic_DNA"/>
</dbReference>
<dbReference type="EMBL" id="BK006939">
    <property type="protein sequence ID" value="DAA07713.1"/>
    <property type="molecule type" value="Genomic_DNA"/>
</dbReference>
<dbReference type="PIR" id="S50559">
    <property type="entry name" value="GRBYCP"/>
</dbReference>
<dbReference type="RefSeq" id="NP_010976.1">
    <property type="nucleotide sequence ID" value="NM_001178947.1"/>
</dbReference>
<dbReference type="BioGRID" id="36796">
    <property type="interactions" value="114"/>
</dbReference>
<dbReference type="DIP" id="DIP-7593N"/>
<dbReference type="FunCoup" id="P17064">
    <property type="interactions" value="84"/>
</dbReference>
<dbReference type="IntAct" id="P17064">
    <property type="interactions" value="6"/>
</dbReference>
<dbReference type="MINT" id="P17064"/>
<dbReference type="STRING" id="4932.YER056C"/>
<dbReference type="TCDB" id="2.A.39.2.1">
    <property type="family name" value="the nucleobase:cation symporter-1 (ncs1) family"/>
</dbReference>
<dbReference type="iPTMnet" id="P17064"/>
<dbReference type="PaxDb" id="4932-YER056C"/>
<dbReference type="PeptideAtlas" id="P17064"/>
<dbReference type="EnsemblFungi" id="YER056C_mRNA">
    <property type="protein sequence ID" value="YER056C"/>
    <property type="gene ID" value="YER056C"/>
</dbReference>
<dbReference type="GeneID" id="856783"/>
<dbReference type="KEGG" id="sce:YER056C"/>
<dbReference type="AGR" id="SGD:S000000858"/>
<dbReference type="SGD" id="S000000858">
    <property type="gene designation" value="FCY2"/>
</dbReference>
<dbReference type="VEuPathDB" id="FungiDB:YER056C"/>
<dbReference type="eggNOG" id="ENOG502QQ8Y">
    <property type="taxonomic scope" value="Eukaryota"/>
</dbReference>
<dbReference type="GeneTree" id="ENSGT00940000176331"/>
<dbReference type="HOGENOM" id="CLU_026016_2_2_1"/>
<dbReference type="InParanoid" id="P17064"/>
<dbReference type="OMA" id="LWLSANM"/>
<dbReference type="OrthoDB" id="2116389at2759"/>
<dbReference type="BioCyc" id="YEAST:G3O-30233-MONOMER"/>
<dbReference type="BioGRID-ORCS" id="856783">
    <property type="hits" value="3 hits in 10 CRISPR screens"/>
</dbReference>
<dbReference type="PRO" id="PR:P17064"/>
<dbReference type="Proteomes" id="UP000002311">
    <property type="component" value="Chromosome V"/>
</dbReference>
<dbReference type="RNAct" id="P17064">
    <property type="molecule type" value="protein"/>
</dbReference>
<dbReference type="GO" id="GO:0071944">
    <property type="term" value="C:cell periphery"/>
    <property type="evidence" value="ECO:0007005"/>
    <property type="project" value="SGD"/>
</dbReference>
<dbReference type="GO" id="GO:0000329">
    <property type="term" value="C:fungal-type vacuole membrane"/>
    <property type="evidence" value="ECO:0007005"/>
    <property type="project" value="SGD"/>
</dbReference>
<dbReference type="GO" id="GO:0005886">
    <property type="term" value="C:plasma membrane"/>
    <property type="evidence" value="ECO:0000314"/>
    <property type="project" value="SGD"/>
</dbReference>
<dbReference type="GO" id="GO:0015212">
    <property type="term" value="F:cytidine transmembrane transporter activity"/>
    <property type="evidence" value="ECO:0000314"/>
    <property type="project" value="SGD"/>
</dbReference>
<dbReference type="GO" id="GO:0015205">
    <property type="term" value="F:nucleobase transmembrane transporter activity"/>
    <property type="evidence" value="ECO:0000314"/>
    <property type="project" value="SGD"/>
</dbReference>
<dbReference type="GO" id="GO:0015861">
    <property type="term" value="P:cytidine transport"/>
    <property type="evidence" value="ECO:0000314"/>
    <property type="project" value="SGD"/>
</dbReference>
<dbReference type="GO" id="GO:0015856">
    <property type="term" value="P:cytosine transport"/>
    <property type="evidence" value="ECO:0000314"/>
    <property type="project" value="SGD"/>
</dbReference>
<dbReference type="GO" id="GO:0072530">
    <property type="term" value="P:purine-containing compound transmembrane transport"/>
    <property type="evidence" value="ECO:0000314"/>
    <property type="project" value="SGD"/>
</dbReference>
<dbReference type="CDD" id="cd11484">
    <property type="entry name" value="SLC-NCS1sbd_CobB-like"/>
    <property type="match status" value="1"/>
</dbReference>
<dbReference type="FunFam" id="1.10.4160.10:FF:000002">
    <property type="entry name" value="Purine-cytosine permease fcyB"/>
    <property type="match status" value="1"/>
</dbReference>
<dbReference type="Gene3D" id="1.10.4160.10">
    <property type="entry name" value="Hydantoin permease"/>
    <property type="match status" value="1"/>
</dbReference>
<dbReference type="InterPro" id="IPR012681">
    <property type="entry name" value="NCS1"/>
</dbReference>
<dbReference type="InterPro" id="IPR001248">
    <property type="entry name" value="Pur-cyt_permease"/>
</dbReference>
<dbReference type="InterPro" id="IPR026030">
    <property type="entry name" value="Pur-cyt_permease_Fcy2/21/22"/>
</dbReference>
<dbReference type="NCBIfam" id="TIGR00800">
    <property type="entry name" value="ncs1"/>
    <property type="match status" value="1"/>
</dbReference>
<dbReference type="PANTHER" id="PTHR31806">
    <property type="entry name" value="PURINE-CYTOSINE PERMEASE FCY2-RELATED"/>
    <property type="match status" value="1"/>
</dbReference>
<dbReference type="PANTHER" id="PTHR31806:SF1">
    <property type="entry name" value="PURINE-CYTOSINE PERMEASE FCY2-RELATED"/>
    <property type="match status" value="1"/>
</dbReference>
<dbReference type="Pfam" id="PF02133">
    <property type="entry name" value="Transp_cyt_pur"/>
    <property type="match status" value="1"/>
</dbReference>
<dbReference type="PIRSF" id="PIRSF002744">
    <property type="entry name" value="Pur-cyt_permease"/>
    <property type="match status" value="1"/>
</dbReference>
<gene>
    <name type="primary">FCY2</name>
    <name type="ordered locus">YER056C</name>
</gene>
<organism>
    <name type="scientific">Saccharomyces cerevisiae (strain ATCC 204508 / S288c)</name>
    <name type="common">Baker's yeast</name>
    <dbReference type="NCBI Taxonomy" id="559292"/>
    <lineage>
        <taxon>Eukaryota</taxon>
        <taxon>Fungi</taxon>
        <taxon>Dikarya</taxon>
        <taxon>Ascomycota</taxon>
        <taxon>Saccharomycotina</taxon>
        <taxon>Saccharomycetes</taxon>
        <taxon>Saccharomycetales</taxon>
        <taxon>Saccharomycetaceae</taxon>
        <taxon>Saccharomyces</taxon>
    </lineage>
</organism>
<proteinExistence type="evidence at protein level"/>
<sequence>MLEEGNNVYEIQDLEKRSPVIGSSLENEKKVAASETFTATSEDDQQYIVESSEATKLSWFHKFFASLNAETKGVEPVTEDEKTDDSILNAASMWFSANMVIASYALGALGPMVFGLNFGQSVLVIIFFNIMGLIFVAFFSVFGAELGLRQMILSRYLVGNVTARIFSLINVIACVGWGIVNTSVSAQLLNMVNEGSGHVCPIWAGCLIIIGGTVLVTFFGYSVIHAYEKWSWVPNFAVFLVIIAQLSRSGKFKGGEWVGGATTAGSVLSFGSSIFGFAAGWTTYAADYTVYMPKSTNKYKIFFSLVAGLAFPLFFTMILGAASAMAALNDPTWKAYYDKNAMGGVIYAILVPNSLNGFGQFCCVLLALSTIANNIPNMYTVALSAQALWAPLAKIPRVVWTMAGNAATLGISIPATYYFDGFMENFMDSIGYYLAIYIAISCSEHFFYRRSFSAYNIDDWDNWEHLPIGIAGTAALIVGAFGVALGMCQTYWVGEIGRLIGKYGGDIGFELGASWAFIIYNILRPLELKYFGR</sequence>
<accession>P17064</accession>
<accession>D3DLV9</accession>
<name>FCY2_YEAST</name>
<feature type="chain" id="PRO_0000197920" description="Purine-cytosine permease FCY2">
    <location>
        <begin position="1"/>
        <end position="533"/>
    </location>
</feature>
<feature type="topological domain" description="Cytoplasmic" evidence="1">
    <location>
        <begin position="1"/>
        <end position="98"/>
    </location>
</feature>
<feature type="transmembrane region" description="Helical" evidence="1">
    <location>
        <begin position="99"/>
        <end position="119"/>
    </location>
</feature>
<feature type="topological domain" description="Extracellular" evidence="1">
    <location>
        <begin position="120"/>
        <end position="121"/>
    </location>
</feature>
<feature type="transmembrane region" description="Helical" evidence="1">
    <location>
        <begin position="122"/>
        <end position="141"/>
    </location>
</feature>
<feature type="topological domain" description="Cytoplasmic" evidence="1">
    <location>
        <begin position="142"/>
        <end position="198"/>
    </location>
</feature>
<feature type="transmembrane region" description="Helical" evidence="1">
    <location>
        <begin position="199"/>
        <end position="218"/>
    </location>
</feature>
<feature type="topological domain" description="Extracellular" evidence="1">
    <location>
        <begin position="219"/>
        <end position="256"/>
    </location>
</feature>
<feature type="transmembrane region" description="Helical" evidence="1">
    <location>
        <begin position="257"/>
        <end position="276"/>
    </location>
</feature>
<feature type="topological domain" description="Cytoplasmic" evidence="1">
    <location>
        <begin position="277"/>
        <end position="300"/>
    </location>
</feature>
<feature type="transmembrane region" description="Helical" evidence="1">
    <location>
        <begin position="301"/>
        <end position="320"/>
    </location>
</feature>
<feature type="topological domain" description="Extracellular" evidence="1">
    <location>
        <begin position="321"/>
        <end position="347"/>
    </location>
</feature>
<feature type="transmembrane region" description="Helical" evidence="1">
    <location>
        <begin position="348"/>
        <end position="367"/>
    </location>
</feature>
<feature type="topological domain" description="Cytoplasmic" evidence="1">
    <location>
        <begin position="368"/>
        <end position="398"/>
    </location>
</feature>
<feature type="transmembrane region" description="Helical" evidence="1">
    <location>
        <begin position="399"/>
        <end position="418"/>
    </location>
</feature>
<feature type="topological domain" description="Extracellular" evidence="1">
    <location>
        <begin position="419"/>
        <end position="465"/>
    </location>
</feature>
<feature type="transmembrane region" description="Helical" evidence="1">
    <location>
        <begin position="466"/>
        <end position="485"/>
    </location>
</feature>
<feature type="topological domain" description="Cytoplasmic" evidence="1">
    <location>
        <begin position="486"/>
        <end position="533"/>
    </location>
</feature>
<feature type="region of interest" description="Surface seeking" evidence="1">
    <location>
        <begin position="165"/>
        <end position="184"/>
    </location>
</feature>
<feature type="modified residue" description="Phosphoserine" evidence="4">
    <location>
        <position position="18"/>
    </location>
</feature>
<feature type="cross-link" description="Glycyl lysine isopeptide (Lys-Gly) (interchain with G-Cter in ubiquitin)" evidence="5">
    <location>
        <position position="16"/>
    </location>
</feature>
<feature type="sequence conflict" description="In Ref. 1; CAA36040." evidence="3" ref="1">
    <original>V</original>
    <variation>M</variation>
    <location>
        <position position="192"/>
    </location>
</feature>
<feature type="sequence conflict" description="In Ref. 1; CAA36040." evidence="3" ref="1">
    <original>A</original>
    <variation>G</variation>
    <location>
        <position position="261"/>
    </location>
</feature>
<feature type="sequence conflict" description="In Ref. 4; V01306." evidence="3" ref="4">
    <original>D</original>
    <variation>Y</variation>
    <location>
        <position position="459"/>
    </location>
</feature>
<comment type="function">
    <text>This permease has a broad specificity towards purines, and also transport cytosine and 5-methylcytosine but neither uracil nor thymine.</text>
</comment>
<comment type="interaction">
    <interactant intactId="EBI-2047850">
        <id>P17064</id>
    </interactant>
    <interactant intactId="EBI-13350">
        <id>P38264</id>
        <label>PHO88</label>
    </interactant>
    <organismsDiffer>false</organismsDiffer>
    <experiments>3</experiments>
</comment>
<comment type="subcellular location">
    <subcellularLocation>
        <location>Membrane</location>
        <topology>Multi-pass membrane protein</topology>
    </subcellularLocation>
</comment>
<comment type="PTM">
    <text>Not N-glycosylated.</text>
</comment>
<comment type="miscellaneous">
    <text evidence="2">Present with 23600 molecules/cell in log phase SD medium.</text>
</comment>
<comment type="similarity">
    <text evidence="3">Belongs to the purine-cytosine permease (2.A.39) family.</text>
</comment>
<evidence type="ECO:0000255" key="1"/>
<evidence type="ECO:0000269" key="2">
    <source>
    </source>
</evidence>
<evidence type="ECO:0000305" key="3"/>
<evidence type="ECO:0007744" key="4">
    <source>
    </source>
</evidence>
<evidence type="ECO:0007744" key="5">
    <source>
    </source>
</evidence>
<protein>
    <recommendedName>
        <fullName>Purine-cytosine permease FCY2</fullName>
        <shortName>PCP FCY2</shortName>
    </recommendedName>
    <alternativeName>
        <fullName>Cytosine/purine transport protein FCY2</fullName>
    </alternativeName>
    <alternativeName>
        <fullName>Fluorocytosine resistance protein 2</fullName>
    </alternativeName>
</protein>
<reference key="1">
    <citation type="journal article" date="1990" name="Mol. Microbiol.">
        <title>The purine-cytosine permease gene of Saccharomyces cerevisiae: primary structure and deduced protein sequence of the FCY2 gene product.</title>
        <authorList>
            <person name="Weber E."/>
            <person name="Rodriguez C."/>
            <person name="Chevalier M.R."/>
            <person name="Jund R."/>
        </authorList>
    </citation>
    <scope>NUCLEOTIDE SEQUENCE [GENOMIC DNA]</scope>
    <source>
        <strain>ATCC 28383 / FL100 / VTT C-80102</strain>
    </source>
</reference>
<reference key="2">
    <citation type="journal article" date="1997" name="Nature">
        <title>The nucleotide sequence of Saccharomyces cerevisiae chromosome V.</title>
        <authorList>
            <person name="Dietrich F.S."/>
            <person name="Mulligan J.T."/>
            <person name="Hennessy K.M."/>
            <person name="Yelton M.A."/>
            <person name="Allen E."/>
            <person name="Araujo R."/>
            <person name="Aviles E."/>
            <person name="Berno A."/>
            <person name="Brennan T."/>
            <person name="Carpenter J."/>
            <person name="Chen E."/>
            <person name="Cherry J.M."/>
            <person name="Chung E."/>
            <person name="Duncan M."/>
            <person name="Guzman E."/>
            <person name="Hartzell G."/>
            <person name="Hunicke-Smith S."/>
            <person name="Hyman R.W."/>
            <person name="Kayser A."/>
            <person name="Komp C."/>
            <person name="Lashkari D."/>
            <person name="Lew H."/>
            <person name="Lin D."/>
            <person name="Mosedale D."/>
            <person name="Nakahara K."/>
            <person name="Namath A."/>
            <person name="Norgren R."/>
            <person name="Oefner P."/>
            <person name="Oh C."/>
            <person name="Petel F.X."/>
            <person name="Roberts D."/>
            <person name="Sehl P."/>
            <person name="Schramm S."/>
            <person name="Shogren T."/>
            <person name="Smith V."/>
            <person name="Taylor P."/>
            <person name="Wei Y."/>
            <person name="Botstein D."/>
            <person name="Davis R.W."/>
        </authorList>
    </citation>
    <scope>NUCLEOTIDE SEQUENCE [LARGE SCALE GENOMIC DNA]</scope>
    <source>
        <strain>ATCC 204508 / S288c</strain>
    </source>
</reference>
<reference key="3">
    <citation type="journal article" date="2014" name="G3 (Bethesda)">
        <title>The reference genome sequence of Saccharomyces cerevisiae: Then and now.</title>
        <authorList>
            <person name="Engel S.R."/>
            <person name="Dietrich F.S."/>
            <person name="Fisk D.G."/>
            <person name="Binkley G."/>
            <person name="Balakrishnan R."/>
            <person name="Costanzo M.C."/>
            <person name="Dwight S.S."/>
            <person name="Hitz B.C."/>
            <person name="Karra K."/>
            <person name="Nash R.S."/>
            <person name="Weng S."/>
            <person name="Wong E.D."/>
            <person name="Lloyd P."/>
            <person name="Skrzypek M.S."/>
            <person name="Miyasato S.R."/>
            <person name="Simison M."/>
            <person name="Cherry J.M."/>
        </authorList>
    </citation>
    <scope>GENOME REANNOTATION</scope>
    <source>
        <strain>ATCC 204508 / S288c</strain>
    </source>
</reference>
<reference key="4">
    <citation type="journal article" date="1983" name="J. Biol. Chem.">
        <title>Repeated DNA sequences upstream from HIS1 also occur at several other co-regulated genes in Saccharomyces cerevisiae.</title>
        <authorList>
            <person name="Hinnebusch A.G."/>
            <person name="Fink G.R."/>
        </authorList>
    </citation>
    <scope>NUCLEOTIDE SEQUENCE [GENOMIC DNA] OF 380-533</scope>
</reference>
<reference key="5">
    <citation type="journal article" date="1995" name="Yeast">
        <title>The immunodetected yeast purine-cytosine permease is not N-linked glycosylated, nor are glycosylation sequences required to have a functional permease.</title>
        <authorList>
            <person name="Rodriguez C."/>
            <person name="Bloch J.C."/>
            <person name="Chevalier M.R."/>
        </authorList>
    </citation>
    <scope>MUTAGENESIS</scope>
</reference>
<reference key="6">
    <citation type="journal article" date="2003" name="Nature">
        <title>Global analysis of protein expression in yeast.</title>
        <authorList>
            <person name="Ghaemmaghami S."/>
            <person name="Huh W.-K."/>
            <person name="Bower K."/>
            <person name="Howson R.W."/>
            <person name="Belle A."/>
            <person name="Dephoure N."/>
            <person name="O'Shea E.K."/>
            <person name="Weissman J.S."/>
        </authorList>
    </citation>
    <scope>LEVEL OF PROTEIN EXPRESSION [LARGE SCALE ANALYSIS]</scope>
</reference>
<reference key="7">
    <citation type="journal article" date="2006" name="Proc. Natl. Acad. Sci. U.S.A.">
        <title>A global topology map of the Saccharomyces cerevisiae membrane proteome.</title>
        <authorList>
            <person name="Kim H."/>
            <person name="Melen K."/>
            <person name="Oesterberg M."/>
            <person name="von Heijne G."/>
        </authorList>
    </citation>
    <scope>TOPOLOGY [LARGE SCALE ANALYSIS]</scope>
    <source>
        <strain>ATCC 208353 / W303-1A</strain>
    </source>
</reference>
<reference key="8">
    <citation type="journal article" date="2009" name="Science">
        <title>Global analysis of Cdk1 substrate phosphorylation sites provides insights into evolution.</title>
        <authorList>
            <person name="Holt L.J."/>
            <person name="Tuch B.B."/>
            <person name="Villen J."/>
            <person name="Johnson A.D."/>
            <person name="Gygi S.P."/>
            <person name="Morgan D.O."/>
        </authorList>
    </citation>
    <scope>PHOSPHORYLATION [LARGE SCALE ANALYSIS] AT SER-18</scope>
    <scope>IDENTIFICATION BY MASS SPECTROMETRY [LARGE SCALE ANALYSIS]</scope>
</reference>
<reference key="9">
    <citation type="journal article" date="2012" name="Proc. Natl. Acad. Sci. U.S.A.">
        <title>N-terminal acetylome analyses and functional insights of the N-terminal acetyltransferase NatB.</title>
        <authorList>
            <person name="Van Damme P."/>
            <person name="Lasa M."/>
            <person name="Polevoda B."/>
            <person name="Gazquez C."/>
            <person name="Elosegui-Artola A."/>
            <person name="Kim D.S."/>
            <person name="De Juan-Pardo E."/>
            <person name="Demeyer K."/>
            <person name="Hole K."/>
            <person name="Larrea E."/>
            <person name="Timmerman E."/>
            <person name="Prieto J."/>
            <person name="Arnesen T."/>
            <person name="Sherman F."/>
            <person name="Gevaert K."/>
            <person name="Aldabe R."/>
        </authorList>
    </citation>
    <scope>IDENTIFICATION BY MASS SPECTROMETRY [LARGE SCALE ANALYSIS]</scope>
</reference>
<reference key="10">
    <citation type="journal article" date="2012" name="Proteomics">
        <title>Sites of ubiquitin attachment in Saccharomyces cerevisiae.</title>
        <authorList>
            <person name="Starita L.M."/>
            <person name="Lo R.S."/>
            <person name="Eng J.K."/>
            <person name="von Haller P.D."/>
            <person name="Fields S."/>
        </authorList>
    </citation>
    <scope>UBIQUITINATION [LARGE SCALE ANALYSIS] AT LYS-16</scope>
    <scope>IDENTIFICATION BY MASS SPECTROMETRY [LARGE SCALE ANALYSIS]</scope>
</reference>